<name>MTNB_GRABC</name>
<protein>
    <recommendedName>
        <fullName evidence="1">Methylthioribulose-1-phosphate dehydratase</fullName>
        <shortName evidence="1">MTRu-1-P dehydratase</shortName>
        <ecNumber evidence="1">4.2.1.109</ecNumber>
    </recommendedName>
</protein>
<evidence type="ECO:0000255" key="1">
    <source>
        <dbReference type="HAMAP-Rule" id="MF_01677"/>
    </source>
</evidence>
<evidence type="ECO:0000305" key="2"/>
<accession>Q0BPT9</accession>
<reference key="1">
    <citation type="journal article" date="2007" name="J. Bacteriol.">
        <title>Genome sequence analysis of the emerging human pathogenic acetic acid bacterium Granulibacter bethesdensis.</title>
        <authorList>
            <person name="Greenberg D.E."/>
            <person name="Porcella S.F."/>
            <person name="Zelazny A.M."/>
            <person name="Virtaneva K."/>
            <person name="Sturdevant D.E."/>
            <person name="Kupko J.J. III"/>
            <person name="Barbian K.D."/>
            <person name="Babar A."/>
            <person name="Dorward D.W."/>
            <person name="Holland S.M."/>
        </authorList>
    </citation>
    <scope>NUCLEOTIDE SEQUENCE [LARGE SCALE GENOMIC DNA]</scope>
    <source>
        <strain>ATCC BAA-1260 / CGDNIH1</strain>
    </source>
</reference>
<feature type="chain" id="PRO_0000357083" description="Methylthioribulose-1-phosphate dehydratase">
    <location>
        <begin position="1"/>
        <end position="214"/>
    </location>
</feature>
<feature type="binding site" evidence="1">
    <location>
        <position position="103"/>
    </location>
    <ligand>
        <name>Zn(2+)</name>
        <dbReference type="ChEBI" id="CHEBI:29105"/>
    </ligand>
</feature>
<feature type="binding site" evidence="1">
    <location>
        <position position="105"/>
    </location>
    <ligand>
        <name>Zn(2+)</name>
        <dbReference type="ChEBI" id="CHEBI:29105"/>
    </ligand>
</feature>
<comment type="function">
    <text evidence="1">Catalyzes the dehydration of methylthioribulose-1-phosphate (MTRu-1-P) into 2,3-diketo-5-methylthiopentyl-1-phosphate (DK-MTP-1-P).</text>
</comment>
<comment type="catalytic activity">
    <reaction evidence="1">
        <text>5-(methylsulfanyl)-D-ribulose 1-phosphate = 5-methylsulfanyl-2,3-dioxopentyl phosphate + H2O</text>
        <dbReference type="Rhea" id="RHEA:15549"/>
        <dbReference type="ChEBI" id="CHEBI:15377"/>
        <dbReference type="ChEBI" id="CHEBI:58548"/>
        <dbReference type="ChEBI" id="CHEBI:58828"/>
        <dbReference type="EC" id="4.2.1.109"/>
    </reaction>
</comment>
<comment type="cofactor">
    <cofactor evidence="1">
        <name>Zn(2+)</name>
        <dbReference type="ChEBI" id="CHEBI:29105"/>
    </cofactor>
    <text evidence="1">Binds 1 zinc ion per subunit.</text>
</comment>
<comment type="pathway">
    <text evidence="1">Amino-acid biosynthesis; L-methionine biosynthesis via salvage pathway; L-methionine from S-methyl-5-thio-alpha-D-ribose 1-phosphate: step 2/6.</text>
</comment>
<comment type="similarity">
    <text evidence="1">Belongs to the aldolase class II family. MtnB subfamily.</text>
</comment>
<comment type="sequence caution" evidence="2">
    <conflict type="erroneous initiation">
        <sequence resource="EMBL-CDS" id="ABI63163"/>
    </conflict>
</comment>
<organism>
    <name type="scientific">Granulibacter bethesdensis (strain ATCC BAA-1260 / CGDNIH1)</name>
    <dbReference type="NCBI Taxonomy" id="391165"/>
    <lineage>
        <taxon>Bacteria</taxon>
        <taxon>Pseudomonadati</taxon>
        <taxon>Pseudomonadota</taxon>
        <taxon>Alphaproteobacteria</taxon>
        <taxon>Acetobacterales</taxon>
        <taxon>Acetobacteraceae</taxon>
        <taxon>Granulibacter</taxon>
    </lineage>
</organism>
<gene>
    <name evidence="1" type="primary">mtnB</name>
    <name type="ordered locus">GbCGDNIH1_2265</name>
</gene>
<proteinExistence type="inferred from homology"/>
<sequence length="214" mass="23025">MTGTVTSVRQPPEWAAVTIVAAGQRMDARGWVPATAGNISVRLPDDTIAITSSGNHKGFLKTSDIMVVDQAGKPLTPGLKPSAETLLHCQIYRLDNQAGAVVHGHSVAATVLSMAPGKNDAPPDFIRLEGYEVLKAFGVKTHQITLDLPILDNDQDMERLASIAEPILLRGAPLGYLIRGHGVYVWGGDMAAALARLEGLEFLLACELERRRLR</sequence>
<dbReference type="EC" id="4.2.1.109" evidence="1"/>
<dbReference type="EMBL" id="CP000394">
    <property type="protein sequence ID" value="ABI63163.1"/>
    <property type="status" value="ALT_INIT"/>
    <property type="molecule type" value="Genomic_DNA"/>
</dbReference>
<dbReference type="RefSeq" id="WP_043453181.1">
    <property type="nucleotide sequence ID" value="NC_008343.2"/>
</dbReference>
<dbReference type="SMR" id="Q0BPT9"/>
<dbReference type="STRING" id="391165.GbCGDNIH1_2265"/>
<dbReference type="KEGG" id="gbe:GbCGDNIH1_2265"/>
<dbReference type="eggNOG" id="COG0235">
    <property type="taxonomic scope" value="Bacteria"/>
</dbReference>
<dbReference type="HOGENOM" id="CLU_006033_4_1_5"/>
<dbReference type="OrthoDB" id="5500703at2"/>
<dbReference type="UniPathway" id="UPA00904">
    <property type="reaction ID" value="UER00875"/>
</dbReference>
<dbReference type="Proteomes" id="UP000001963">
    <property type="component" value="Chromosome"/>
</dbReference>
<dbReference type="GO" id="GO:0005829">
    <property type="term" value="C:cytosol"/>
    <property type="evidence" value="ECO:0007669"/>
    <property type="project" value="TreeGrafter"/>
</dbReference>
<dbReference type="GO" id="GO:0016832">
    <property type="term" value="F:aldehyde-lyase activity"/>
    <property type="evidence" value="ECO:0007669"/>
    <property type="project" value="TreeGrafter"/>
</dbReference>
<dbReference type="GO" id="GO:0046570">
    <property type="term" value="F:methylthioribulose 1-phosphate dehydratase activity"/>
    <property type="evidence" value="ECO:0007669"/>
    <property type="project" value="UniProtKB-UniRule"/>
</dbReference>
<dbReference type="GO" id="GO:0008270">
    <property type="term" value="F:zinc ion binding"/>
    <property type="evidence" value="ECO:0007669"/>
    <property type="project" value="UniProtKB-UniRule"/>
</dbReference>
<dbReference type="GO" id="GO:0019509">
    <property type="term" value="P:L-methionine salvage from methylthioadenosine"/>
    <property type="evidence" value="ECO:0007669"/>
    <property type="project" value="UniProtKB-UniRule"/>
</dbReference>
<dbReference type="GO" id="GO:0019323">
    <property type="term" value="P:pentose catabolic process"/>
    <property type="evidence" value="ECO:0007669"/>
    <property type="project" value="TreeGrafter"/>
</dbReference>
<dbReference type="Gene3D" id="3.40.225.10">
    <property type="entry name" value="Class II aldolase/adducin N-terminal domain"/>
    <property type="match status" value="1"/>
</dbReference>
<dbReference type="HAMAP" id="MF_01677">
    <property type="entry name" value="Salvage_MtnB"/>
    <property type="match status" value="1"/>
</dbReference>
<dbReference type="InterPro" id="IPR050197">
    <property type="entry name" value="Aldolase_class_II_sugar_metab"/>
</dbReference>
<dbReference type="InterPro" id="IPR001303">
    <property type="entry name" value="Aldolase_II/adducin_N"/>
</dbReference>
<dbReference type="InterPro" id="IPR036409">
    <property type="entry name" value="Aldolase_II/adducin_N_sf"/>
</dbReference>
<dbReference type="InterPro" id="IPR017714">
    <property type="entry name" value="MethylthioRu-1-P_deHdtase_MtnB"/>
</dbReference>
<dbReference type="NCBIfam" id="NF006672">
    <property type="entry name" value="PRK09220.1"/>
    <property type="match status" value="1"/>
</dbReference>
<dbReference type="NCBIfam" id="TIGR03328">
    <property type="entry name" value="salvage_mtnB"/>
    <property type="match status" value="1"/>
</dbReference>
<dbReference type="PANTHER" id="PTHR22789:SF0">
    <property type="entry name" value="3-OXO-TETRONATE 4-PHOSPHATE DECARBOXYLASE-RELATED"/>
    <property type="match status" value="1"/>
</dbReference>
<dbReference type="PANTHER" id="PTHR22789">
    <property type="entry name" value="FUCULOSE PHOSPHATE ALDOLASE"/>
    <property type="match status" value="1"/>
</dbReference>
<dbReference type="Pfam" id="PF00596">
    <property type="entry name" value="Aldolase_II"/>
    <property type="match status" value="1"/>
</dbReference>
<dbReference type="SMART" id="SM01007">
    <property type="entry name" value="Aldolase_II"/>
    <property type="match status" value="1"/>
</dbReference>
<dbReference type="SUPFAM" id="SSF53639">
    <property type="entry name" value="AraD/HMP-PK domain-like"/>
    <property type="match status" value="1"/>
</dbReference>
<keyword id="KW-0028">Amino-acid biosynthesis</keyword>
<keyword id="KW-0456">Lyase</keyword>
<keyword id="KW-0479">Metal-binding</keyword>
<keyword id="KW-0486">Methionine biosynthesis</keyword>
<keyword id="KW-1185">Reference proteome</keyword>
<keyword id="KW-0862">Zinc</keyword>